<protein>
    <recommendedName>
        <fullName evidence="2">Translation initiation factor IF-2</fullName>
    </recommendedName>
</protein>
<gene>
    <name evidence="2" type="primary">infB</name>
    <name type="ordered locus">MYPU_2050</name>
</gene>
<accession>Q98R05</accession>
<keyword id="KW-0963">Cytoplasm</keyword>
<keyword id="KW-0342">GTP-binding</keyword>
<keyword id="KW-0396">Initiation factor</keyword>
<keyword id="KW-0547">Nucleotide-binding</keyword>
<keyword id="KW-0648">Protein biosynthesis</keyword>
<keyword id="KW-1185">Reference proteome</keyword>
<dbReference type="EMBL" id="AL445563">
    <property type="protein sequence ID" value="CAC13378.1"/>
    <property type="molecule type" value="Genomic_DNA"/>
</dbReference>
<dbReference type="PIR" id="E90537">
    <property type="entry name" value="E90537"/>
</dbReference>
<dbReference type="RefSeq" id="WP_010925009.1">
    <property type="nucleotide sequence ID" value="NC_002771.1"/>
</dbReference>
<dbReference type="SMR" id="Q98R05"/>
<dbReference type="STRING" id="272635.gene:17576792"/>
<dbReference type="KEGG" id="mpu:MYPU_2050"/>
<dbReference type="eggNOG" id="COG0532">
    <property type="taxonomic scope" value="Bacteria"/>
</dbReference>
<dbReference type="HOGENOM" id="CLU_006301_5_1_14"/>
<dbReference type="BioCyc" id="MPUL272635:G1GT6-207-MONOMER"/>
<dbReference type="Proteomes" id="UP000000528">
    <property type="component" value="Chromosome"/>
</dbReference>
<dbReference type="GO" id="GO:0005829">
    <property type="term" value="C:cytosol"/>
    <property type="evidence" value="ECO:0007669"/>
    <property type="project" value="TreeGrafter"/>
</dbReference>
<dbReference type="GO" id="GO:0005525">
    <property type="term" value="F:GTP binding"/>
    <property type="evidence" value="ECO:0007669"/>
    <property type="project" value="UniProtKB-KW"/>
</dbReference>
<dbReference type="GO" id="GO:0003924">
    <property type="term" value="F:GTPase activity"/>
    <property type="evidence" value="ECO:0007669"/>
    <property type="project" value="UniProtKB-UniRule"/>
</dbReference>
<dbReference type="GO" id="GO:0003743">
    <property type="term" value="F:translation initiation factor activity"/>
    <property type="evidence" value="ECO:0007669"/>
    <property type="project" value="UniProtKB-UniRule"/>
</dbReference>
<dbReference type="CDD" id="cd01887">
    <property type="entry name" value="IF2_eIF5B"/>
    <property type="match status" value="1"/>
</dbReference>
<dbReference type="CDD" id="cd03702">
    <property type="entry name" value="IF2_mtIF2_II"/>
    <property type="match status" value="1"/>
</dbReference>
<dbReference type="CDD" id="cd03692">
    <property type="entry name" value="mtIF2_IVc"/>
    <property type="match status" value="1"/>
</dbReference>
<dbReference type="FunFam" id="2.40.30.10:FF:000008">
    <property type="entry name" value="Translation initiation factor IF-2"/>
    <property type="match status" value="1"/>
</dbReference>
<dbReference type="FunFam" id="2.40.30.10:FF:000054">
    <property type="entry name" value="Translation initiation factor IF-2"/>
    <property type="match status" value="1"/>
</dbReference>
<dbReference type="FunFam" id="3.40.50.10050:FF:000001">
    <property type="entry name" value="Translation initiation factor IF-2"/>
    <property type="match status" value="1"/>
</dbReference>
<dbReference type="FunFam" id="3.40.50.300:FF:000019">
    <property type="entry name" value="Translation initiation factor IF-2"/>
    <property type="match status" value="1"/>
</dbReference>
<dbReference type="Gene3D" id="3.40.50.300">
    <property type="entry name" value="P-loop containing nucleotide triphosphate hydrolases"/>
    <property type="match status" value="1"/>
</dbReference>
<dbReference type="Gene3D" id="2.40.30.10">
    <property type="entry name" value="Translation factors"/>
    <property type="match status" value="2"/>
</dbReference>
<dbReference type="Gene3D" id="3.40.50.10050">
    <property type="entry name" value="Translation initiation factor IF- 2, domain 3"/>
    <property type="match status" value="1"/>
</dbReference>
<dbReference type="HAMAP" id="MF_00100_B">
    <property type="entry name" value="IF_2_B"/>
    <property type="match status" value="1"/>
</dbReference>
<dbReference type="InterPro" id="IPR053905">
    <property type="entry name" value="EF-G-like_DII"/>
</dbReference>
<dbReference type="InterPro" id="IPR044145">
    <property type="entry name" value="IF2_II"/>
</dbReference>
<dbReference type="InterPro" id="IPR006847">
    <property type="entry name" value="IF2_N"/>
</dbReference>
<dbReference type="InterPro" id="IPR027417">
    <property type="entry name" value="P-loop_NTPase"/>
</dbReference>
<dbReference type="InterPro" id="IPR005225">
    <property type="entry name" value="Small_GTP-bd"/>
</dbReference>
<dbReference type="InterPro" id="IPR000795">
    <property type="entry name" value="T_Tr_GTP-bd_dom"/>
</dbReference>
<dbReference type="InterPro" id="IPR000178">
    <property type="entry name" value="TF_IF2_bacterial-like"/>
</dbReference>
<dbReference type="InterPro" id="IPR015760">
    <property type="entry name" value="TIF_IF2"/>
</dbReference>
<dbReference type="InterPro" id="IPR023115">
    <property type="entry name" value="TIF_IF2_dom3"/>
</dbReference>
<dbReference type="InterPro" id="IPR036925">
    <property type="entry name" value="TIF_IF2_dom3_sf"/>
</dbReference>
<dbReference type="InterPro" id="IPR009000">
    <property type="entry name" value="Transl_B-barrel_sf"/>
</dbReference>
<dbReference type="NCBIfam" id="TIGR00487">
    <property type="entry name" value="IF-2"/>
    <property type="match status" value="1"/>
</dbReference>
<dbReference type="NCBIfam" id="TIGR00231">
    <property type="entry name" value="small_GTP"/>
    <property type="match status" value="1"/>
</dbReference>
<dbReference type="PANTHER" id="PTHR43381:SF5">
    <property type="entry name" value="TR-TYPE G DOMAIN-CONTAINING PROTEIN"/>
    <property type="match status" value="1"/>
</dbReference>
<dbReference type="PANTHER" id="PTHR43381">
    <property type="entry name" value="TRANSLATION INITIATION FACTOR IF-2-RELATED"/>
    <property type="match status" value="1"/>
</dbReference>
<dbReference type="Pfam" id="PF22042">
    <property type="entry name" value="EF-G_D2"/>
    <property type="match status" value="1"/>
</dbReference>
<dbReference type="Pfam" id="PF00009">
    <property type="entry name" value="GTP_EFTU"/>
    <property type="match status" value="1"/>
</dbReference>
<dbReference type="Pfam" id="PF11987">
    <property type="entry name" value="IF-2"/>
    <property type="match status" value="1"/>
</dbReference>
<dbReference type="Pfam" id="PF04760">
    <property type="entry name" value="IF2_N"/>
    <property type="match status" value="1"/>
</dbReference>
<dbReference type="PRINTS" id="PR00315">
    <property type="entry name" value="ELONGATNFCT"/>
</dbReference>
<dbReference type="SUPFAM" id="SSF52156">
    <property type="entry name" value="Initiation factor IF2/eIF5b, domain 3"/>
    <property type="match status" value="1"/>
</dbReference>
<dbReference type="SUPFAM" id="SSF52540">
    <property type="entry name" value="P-loop containing nucleoside triphosphate hydrolases"/>
    <property type="match status" value="1"/>
</dbReference>
<dbReference type="SUPFAM" id="SSF50447">
    <property type="entry name" value="Translation proteins"/>
    <property type="match status" value="2"/>
</dbReference>
<dbReference type="PROSITE" id="PS51722">
    <property type="entry name" value="G_TR_2"/>
    <property type="match status" value="1"/>
</dbReference>
<evidence type="ECO:0000250" key="1"/>
<evidence type="ECO:0000255" key="2">
    <source>
        <dbReference type="HAMAP-Rule" id="MF_00100"/>
    </source>
</evidence>
<name>IF2_MYCPU</name>
<organism>
    <name type="scientific">Mycoplasmopsis pulmonis (strain UAB CTIP)</name>
    <name type="common">Mycoplasma pulmonis</name>
    <dbReference type="NCBI Taxonomy" id="272635"/>
    <lineage>
        <taxon>Bacteria</taxon>
        <taxon>Bacillati</taxon>
        <taxon>Mycoplasmatota</taxon>
        <taxon>Mycoplasmoidales</taxon>
        <taxon>Metamycoplasmataceae</taxon>
        <taxon>Mycoplasmopsis</taxon>
    </lineage>
</organism>
<proteinExistence type="inferred from homology"/>
<feature type="chain" id="PRO_0000232590" description="Translation initiation factor IF-2">
    <location>
        <begin position="1"/>
        <end position="603"/>
    </location>
</feature>
<feature type="domain" description="tr-type G">
    <location>
        <begin position="112"/>
        <end position="279"/>
    </location>
</feature>
<feature type="region of interest" description="G1" evidence="1">
    <location>
        <begin position="121"/>
        <end position="128"/>
    </location>
</feature>
<feature type="region of interest" description="G2" evidence="1">
    <location>
        <begin position="146"/>
        <end position="150"/>
    </location>
</feature>
<feature type="region of interest" description="G3" evidence="1">
    <location>
        <begin position="167"/>
        <end position="170"/>
    </location>
</feature>
<feature type="region of interest" description="G4" evidence="1">
    <location>
        <begin position="221"/>
        <end position="224"/>
    </location>
</feature>
<feature type="region of interest" description="G5" evidence="1">
    <location>
        <begin position="257"/>
        <end position="259"/>
    </location>
</feature>
<feature type="binding site" evidence="2">
    <location>
        <begin position="121"/>
        <end position="128"/>
    </location>
    <ligand>
        <name>GTP</name>
        <dbReference type="ChEBI" id="CHEBI:37565"/>
    </ligand>
</feature>
<feature type="binding site" evidence="2">
    <location>
        <begin position="167"/>
        <end position="171"/>
    </location>
    <ligand>
        <name>GTP</name>
        <dbReference type="ChEBI" id="CHEBI:37565"/>
    </ligand>
</feature>
<feature type="binding site" evidence="2">
    <location>
        <begin position="221"/>
        <end position="224"/>
    </location>
    <ligand>
        <name>GTP</name>
        <dbReference type="ChEBI" id="CHEBI:37565"/>
    </ligand>
</feature>
<reference key="1">
    <citation type="journal article" date="2001" name="Nucleic Acids Res.">
        <title>The complete genome sequence of the murine respiratory pathogen Mycoplasma pulmonis.</title>
        <authorList>
            <person name="Chambaud I."/>
            <person name="Heilig R."/>
            <person name="Ferris S."/>
            <person name="Barbe V."/>
            <person name="Samson D."/>
            <person name="Galisson F."/>
            <person name="Moszer I."/>
            <person name="Dybvig K."/>
            <person name="Wroblewski H."/>
            <person name="Viari A."/>
            <person name="Rocha E.P.C."/>
            <person name="Blanchard A."/>
        </authorList>
    </citation>
    <scope>NUCLEOTIDE SEQUENCE [LARGE SCALE GENOMIC DNA]</scope>
    <source>
        <strain>UAB CTIP</strain>
    </source>
</reference>
<sequence>MAKKRDKRLSNINEIKTQIINVKTELKNGVFIFSSPMTIGEFAQKINISGTEIVKEYFLKGKMYTLNHILSEEEIADLCFKHGYDFRVEKEINASNFLDNIEFEDKKEDLETRPPIITIMGHVDHGKTTLIDKIRKSNIVSTESSGITQHTGAYQIIYDNKKITFLDTPGHEAFSAMRARGSKVTDIVILVVAADDGVKPQTKEAIAHAQAANVPIIVFVNKMDKPSKDLNRLKNDLSVSGINLEEWGGDTPIVYGSALKGEGIEKLFENINLQAEILDLKFNPKRHPLGVVIESKMDKGVGSLTTVIVQNGTLHKGDFLVAGPRYGRVKAIYDTNKKPLKKVGAGTPVFVIGLNYAPSAGEKFVGINDEKYAKKLSQEREDSEKQEKFLQQTQTISIRRDNDKKIFNIIIKSDTQGTAEAIKDLILQIANDEIEVIVVSYGIGVINNSDLLLAQTSNSEIIGFNSKPNPNIKQQAEDLNIQINSFDVVYKIVDYLNEKINKMVKPKFEKRTIGRAKILKVFFYSKVGNIAGCLMEEGHVKSDSFVKVYRKNKLIHDGRVETLRKGPDEVKKIEKGFEFGLRIKNFDDIKEDDQLEIIEEFRI</sequence>
<comment type="function">
    <text evidence="2">One of the essential components for the initiation of protein synthesis. Protects formylmethionyl-tRNA from spontaneous hydrolysis and promotes its binding to the 30S ribosomal subunits. Also involved in the hydrolysis of GTP during the formation of the 70S ribosomal complex.</text>
</comment>
<comment type="subcellular location">
    <subcellularLocation>
        <location evidence="2">Cytoplasm</location>
    </subcellularLocation>
</comment>
<comment type="similarity">
    <text evidence="2">Belongs to the TRAFAC class translation factor GTPase superfamily. Classic translation factor GTPase family. IF-2 subfamily.</text>
</comment>